<reference key="1">
    <citation type="journal article" date="1985" name="EMBO J.">
        <title>Nucleotide sequence of the L1 ribosomal protein gene of Xenopus laevis: remarkable sequence homology among introns.</title>
        <authorList>
            <person name="Loreni F."/>
            <person name="Ruberti I."/>
            <person name="Bozzoni I."/>
            <person name="Pierandrei-Amaldi P."/>
            <person name="Amaldi F."/>
        </authorList>
    </citation>
    <scope>NUCLEOTIDE SEQUENCE [GENOMIC DNA / MRNA]</scope>
</reference>
<reference key="2">
    <citation type="submission" date="2005-10" db="EMBL/GenBank/DDBJ databases">
        <authorList>
            <consortium name="NIH - Xenopus Gene Collection (XGC) project"/>
        </authorList>
    </citation>
    <scope>NUCLEOTIDE SEQUENCE [LARGE SCALE MRNA]</scope>
    <source>
        <tissue>Neurula</tissue>
        <tissue>Tail bud</tissue>
    </source>
</reference>
<keyword id="KW-0963">Cytoplasm</keyword>
<keyword id="KW-1185">Reference proteome</keyword>
<keyword id="KW-0687">Ribonucleoprotein</keyword>
<keyword id="KW-0689">Ribosomal protein</keyword>
<name>RL4A_XENLA</name>
<sequence length="396" mass="44909">MAVSMACARPLISVYSEKGESSGKNVTMPAVFRAPIRPDIVNFVHTNLRKNNRQPYAVSKLAGHQTSAESWGTGRAVARIPRVRGGGTHRSGQGAFGNMCRGGRMFAPTKTWRRWHRRVNTTQKRYAVCSALAASALPALIMSKGHRIEEIPEVPLVVEDKVESYKKTKEAVLLLKKLKAWNDIKKVYASQRMRAGKGKMRNRRRIQRRGPCVIYNENNGLVKAFRNIPGITLLNVSKLNLLRLAPGGHVGRFCIWTESAFRKLDDLYGTWRKSAKLKADYNLPMHKMTNTDLTRILKSQEIQRALRAPNKKVKRRELKKNPLKNLRIMMRLNPYAKTARRHAILQQLENIKAKEKKPDDGKPKAKKPLDAKTKMIKLAKAKKRQAREAAKAAETK</sequence>
<gene>
    <name type="primary">rpl4-a</name>
    <name type="synonym">rpl-4</name>
    <name type="synonym">rpl1a</name>
</gene>
<protein>
    <recommendedName>
        <fullName evidence="3">Large ribosomal subunit protein uL4A</fullName>
    </recommendedName>
    <alternativeName>
        <fullName>60S ribosomal protein L4-A</fullName>
    </alternativeName>
    <alternativeName>
        <fullName>L1A</fullName>
    </alternativeName>
</protein>
<comment type="function">
    <text evidence="1">Component of the large ribosomal subunit. The ribosome is a large ribonucleoprotein complex responsible for the synthesis of proteins in the cell.</text>
</comment>
<comment type="subunit">
    <text evidence="1">Component of the large ribosomal subunit.</text>
</comment>
<comment type="subcellular location">
    <subcellularLocation>
        <location evidence="1">Cytoplasm</location>
    </subcellularLocation>
</comment>
<comment type="similarity">
    <text evidence="3">Belongs to the universal ribosomal protein uL4 family.</text>
</comment>
<feature type="chain" id="PRO_0000129354" description="Large ribosomal subunit protein uL4A">
    <location>
        <begin position="1"/>
        <end position="396"/>
    </location>
</feature>
<feature type="region of interest" description="Disordered" evidence="2">
    <location>
        <begin position="352"/>
        <end position="374"/>
    </location>
</feature>
<feature type="compositionally biased region" description="Basic and acidic residues" evidence="2">
    <location>
        <begin position="352"/>
        <end position="373"/>
    </location>
</feature>
<feature type="sequence conflict" description="In Ref. 1; CAA29796." evidence="3" ref="1">
    <original>P</original>
    <variation>L</variation>
    <location>
        <position position="246"/>
    </location>
</feature>
<feature type="sequence conflict" description="In Ref. 2; CAA28843." evidence="3" ref="2">
    <original>A</original>
    <variation>P</variation>
    <location>
        <position position="392"/>
    </location>
</feature>
<accession>P08429</accession>
<accession>Q7ZY88</accession>
<accession>Q91843</accession>
<organism>
    <name type="scientific">Xenopus laevis</name>
    <name type="common">African clawed frog</name>
    <dbReference type="NCBI Taxonomy" id="8355"/>
    <lineage>
        <taxon>Eukaryota</taxon>
        <taxon>Metazoa</taxon>
        <taxon>Chordata</taxon>
        <taxon>Craniata</taxon>
        <taxon>Vertebrata</taxon>
        <taxon>Euteleostomi</taxon>
        <taxon>Amphibia</taxon>
        <taxon>Batrachia</taxon>
        <taxon>Anura</taxon>
        <taxon>Pipoidea</taxon>
        <taxon>Pipidae</taxon>
        <taxon>Xenopodinae</taxon>
        <taxon>Xenopus</taxon>
        <taxon>Xenopus</taxon>
    </lineage>
</organism>
<evidence type="ECO:0000250" key="1">
    <source>
        <dbReference type="UniProtKB" id="P36578"/>
    </source>
</evidence>
<evidence type="ECO:0000256" key="2">
    <source>
        <dbReference type="SAM" id="MobiDB-lite"/>
    </source>
</evidence>
<evidence type="ECO:0000305" key="3"/>
<dbReference type="EMBL" id="X05216">
    <property type="protein sequence ID" value="CAA28843.1"/>
    <property type="molecule type" value="mRNA"/>
</dbReference>
<dbReference type="EMBL" id="X06552">
    <property type="protein sequence ID" value="CAA29796.1"/>
    <property type="molecule type" value="Genomic_DNA"/>
</dbReference>
<dbReference type="EMBL" id="BC043895">
    <property type="protein sequence ID" value="AAH43895.1"/>
    <property type="molecule type" value="mRNA"/>
</dbReference>
<dbReference type="EMBL" id="BC106315">
    <property type="protein sequence ID" value="AAI06316.1"/>
    <property type="molecule type" value="mRNA"/>
</dbReference>
<dbReference type="PIR" id="A24579">
    <property type="entry name" value="R5XL1A"/>
</dbReference>
<dbReference type="RefSeq" id="NP_001080545.1">
    <property type="nucleotide sequence ID" value="NM_001087076.1"/>
</dbReference>
<dbReference type="SMR" id="P08429"/>
<dbReference type="BioGRID" id="98479">
    <property type="interactions" value="2"/>
</dbReference>
<dbReference type="IntAct" id="P08429">
    <property type="interactions" value="1"/>
</dbReference>
<dbReference type="DNASU" id="380237"/>
<dbReference type="GeneID" id="380237"/>
<dbReference type="KEGG" id="xla:380237"/>
<dbReference type="AGR" id="Xenbase:XB-GENE-968399"/>
<dbReference type="CTD" id="380237"/>
<dbReference type="Xenbase" id="XB-GENE-968399">
    <property type="gene designation" value="rpl4.L"/>
</dbReference>
<dbReference type="OrthoDB" id="10259785at2759"/>
<dbReference type="Proteomes" id="UP000186698">
    <property type="component" value="Chromosome 3L"/>
</dbReference>
<dbReference type="Bgee" id="380237">
    <property type="expression patterns" value="Expressed in lung and 19 other cell types or tissues"/>
</dbReference>
<dbReference type="GO" id="GO:0022625">
    <property type="term" value="C:cytosolic large ribosomal subunit"/>
    <property type="evidence" value="ECO:0000318"/>
    <property type="project" value="GO_Central"/>
</dbReference>
<dbReference type="GO" id="GO:0003723">
    <property type="term" value="F:RNA binding"/>
    <property type="evidence" value="ECO:0000318"/>
    <property type="project" value="GO_Central"/>
</dbReference>
<dbReference type="GO" id="GO:0003735">
    <property type="term" value="F:structural constituent of ribosome"/>
    <property type="evidence" value="ECO:0000318"/>
    <property type="project" value="GO_Central"/>
</dbReference>
<dbReference type="GO" id="GO:0006412">
    <property type="term" value="P:translation"/>
    <property type="evidence" value="ECO:0007669"/>
    <property type="project" value="InterPro"/>
</dbReference>
<dbReference type="FunFam" id="3.40.1370.10:FF:000002">
    <property type="entry name" value="60S ribosomal protein L4"/>
    <property type="match status" value="1"/>
</dbReference>
<dbReference type="Gene3D" id="3.40.1370.10">
    <property type="match status" value="1"/>
</dbReference>
<dbReference type="InterPro" id="IPR025755">
    <property type="entry name" value="Ribos_uL4_C_dom"/>
</dbReference>
<dbReference type="InterPro" id="IPR002136">
    <property type="entry name" value="Ribosomal_uL4"/>
</dbReference>
<dbReference type="InterPro" id="IPR023574">
    <property type="entry name" value="Ribosomal_uL4_dom_sf"/>
</dbReference>
<dbReference type="InterPro" id="IPR013000">
    <property type="entry name" value="Ribosomal_uL4_euk/arc_CS"/>
</dbReference>
<dbReference type="InterPro" id="IPR045240">
    <property type="entry name" value="Ribosomal_uL4_euk/arch"/>
</dbReference>
<dbReference type="PANTHER" id="PTHR19431">
    <property type="entry name" value="60S RIBOSOMAL PROTEIN L4"/>
    <property type="match status" value="1"/>
</dbReference>
<dbReference type="Pfam" id="PF14374">
    <property type="entry name" value="Ribos_L4_asso_C"/>
    <property type="match status" value="1"/>
</dbReference>
<dbReference type="Pfam" id="PF00573">
    <property type="entry name" value="Ribosomal_L4"/>
    <property type="match status" value="1"/>
</dbReference>
<dbReference type="SUPFAM" id="SSF52166">
    <property type="entry name" value="Ribosomal protein L4"/>
    <property type="match status" value="1"/>
</dbReference>
<dbReference type="PROSITE" id="PS00939">
    <property type="entry name" value="RIBOSOMAL_L1E"/>
    <property type="match status" value="1"/>
</dbReference>
<proteinExistence type="evidence at transcript level"/>